<proteinExistence type="inferred from homology"/>
<gene>
    <name evidence="4" type="primary">phqA</name>
</gene>
<evidence type="ECO:0000250" key="1">
    <source>
        <dbReference type="UniProtKB" id="Q4WAW7"/>
    </source>
</evidence>
<evidence type="ECO:0000269" key="2">
    <source>
    </source>
</evidence>
<evidence type="ECO:0000269" key="3">
    <source>
    </source>
</evidence>
<evidence type="ECO:0000303" key="4">
    <source>
    </source>
</evidence>
<evidence type="ECO:0000305" key="5"/>
<evidence type="ECO:0000305" key="6">
    <source>
    </source>
</evidence>
<feature type="chain" id="PRO_0000448863" description="Prenyltransferase phqA">
    <location>
        <begin position="1"/>
        <end position="405"/>
    </location>
</feature>
<feature type="binding site" evidence="1">
    <location>
        <position position="195"/>
    </location>
    <ligand>
        <name>dimethylallyl diphosphate</name>
        <dbReference type="ChEBI" id="CHEBI:57623"/>
    </ligand>
</feature>
<feature type="binding site" evidence="1">
    <location>
        <position position="262"/>
    </location>
    <ligand>
        <name>dimethylallyl diphosphate</name>
        <dbReference type="ChEBI" id="CHEBI:57623"/>
    </ligand>
</feature>
<feature type="binding site" evidence="1">
    <location>
        <position position="332"/>
    </location>
    <ligand>
        <name>dimethylallyl diphosphate</name>
        <dbReference type="ChEBI" id="CHEBI:57623"/>
    </ligand>
</feature>
<sequence length="405" mass="45359">MGSINIVTPYMKIGQYLSFRNRDHFSWWHQKGPVLSQMLQACHYGVHEQYQYLTLFYAHLIPALGAYTEPSVGQKGNTLLSGAGRLELSRTFTVDDSSLRIAFEPTSFLASEKGTDPLNRVPLSRLLSVLGQLSGVSLGTDRYRTLADQLTTSDDDEEKLLNEPTLAEQLQSLPSRTQNILALELVNGFVKPELYFHPQMKALASGALVEDLLFDALRSVDSAGRLGKAIDLAKEFVQAAPTTTRPQFISYQIERSHSGAAKLFLTESAINWDQISGLWRYAQPETIQTEQNRALRVLWESLNVVEGNRGPNQFPIMMVLGLFAEEPFVRPQVAFPVVGMTEGAIARSIGRFFDNMGWKESSQSYVDGLRSYFPNEDLDQPLGKQAWVALSLFDSENPALTVFYY</sequence>
<organism>
    <name type="scientific">Penicillium fellutanum</name>
    <dbReference type="NCBI Taxonomy" id="70095"/>
    <lineage>
        <taxon>Eukaryota</taxon>
        <taxon>Fungi</taxon>
        <taxon>Dikarya</taxon>
        <taxon>Ascomycota</taxon>
        <taxon>Pezizomycotina</taxon>
        <taxon>Eurotiomycetes</taxon>
        <taxon>Eurotiomycetidae</taxon>
        <taxon>Eurotiales</taxon>
        <taxon>Aspergillaceae</taxon>
        <taxon>Penicillium</taxon>
    </lineage>
</organism>
<protein>
    <recommendedName>
        <fullName evidence="4">Prenyltransferase phqA</fullName>
        <ecNumber evidence="6">2.5.1.-</ecNumber>
    </recommendedName>
    <alternativeName>
        <fullName evidence="4">Paraherquamide biosynthesis cluster protein A</fullName>
    </alternativeName>
</protein>
<comment type="function">
    <text evidence="2 3 6">Prenyltransferase; part of the gene cluster that mediates the biosynthesis of paraherquamide, a fungal indole alkaloid that belongs to a family of natural products containing a characteristic bicyclo[2.2.2]diazaoctane core (PubMed:23213353). The first steps in the biosynthesis of paraherquamide is the production of the beta-methyl-proline precursor from L-isoleucine (Probable). They require oxidation of a terminally hydroxylated L-isoleucine to the corresponding aldehyde by enzymes which have still to be identified (Probable). Spontaneous cyclization and dehydration would yield the 4-methyl pyrolline-5-carboxylic acid, which is then reduced by the pyrroline-5-carboxylate reductase phqD leading to the beta-methyl-proline precursor (Probable). The next step of paraherquamide biosynthesis involves coupling of beta-methyl-proline and L-tryptophan by the bimodular NRPS phqB, to produce a monooxopiperazine intermediate (Probable). The reductase (R) domain of phqB utilizes NADPH for hydride transfer to reduce the thioester bond of the T domain-tethered linear dipeptide to a hemithioaminal intermediate, which spontaneously cleaves the C-S bond to release the aldehyde product (PubMed:31548667). This compound undergoes spontaneous cyclization and dehydration to give a dienamine which is reverse prenylated at C-2 by the reverse prenyltransferase phqJ (Probable). The other prenyltransferase present in the cluster, phqI may be a redundant gene in the pathway (Probable). During biosynthetic assembly, the key step to produce the polycyclic core is catalyzed by the bifunctional reductase and intramolecular [4+2] Diels-Alderase, phqE, resulting in formation of the [2.2.2] diazaoctane intermediate preparaherquamide (PubMed:31548667). Following formation of preparaherquamide, an indole 2,3-epoxidation-initiated pinacol-like rearrangement is catalyzed by the phqK FAD-dependent monooxygenase (Probable). The prenyltransferase phqA, the cytochrome P450 monooxygenase phqL, and the FAD-linked oxidoreductase phqH (or the cytochrome P450 monooxygenase phqM), are proposed to be involved in the formation of the pyran ring (Probable). The FAD-dependent monooxygenase phqK is likely responsible for generation of the spiro-oxindole, and the N-methylation is likely mediated by the phqN methyltransferase leading to the isolable natural product paraherquamide F (Probable). However, the order of these biosynthetic steps has still to be determined (Probable). In late-stage paraherquamide biosynthesis, the third P450 monooxygenase, phqO, is probably responsible for the C-14 hydroxylation, transforming paraherquamide F to paraherquamide G, and paraherquamide E to the final product paraherquamide A (Probable). The expansion from the 6-membered ring pyran (in paraherquamides F and G) to the 7-membered dioxepin ring (in paraherquamides A and E) represents a poorly understood but intriguing process that probably involves the 2-oxoglutarate-dependent dioxygenase phqC (Probable). Finally, the remaining members of the paraherquamide cluster, including phqI as well as phqM (or phqH), do not have a clearly prescribed role and appear to be redundant (Probable).</text>
</comment>
<comment type="pathway">
    <text evidence="6">Alkaloid biosynthesis.</text>
</comment>
<comment type="similarity">
    <text evidence="5">Belongs to the tryptophan dimethylallyltransferase family.</text>
</comment>
<keyword id="KW-0017">Alkaloid metabolism</keyword>
<keyword id="KW-0637">Prenyltransferase</keyword>
<keyword id="KW-0808">Transferase</keyword>
<accession>L0E4G3</accession>
<reference key="1">
    <citation type="journal article" date="2012" name="Med. Chem. Commun.">
        <title>Comparative analysis of the biosynthetic systems for fungal bicyclo[2.2.2]diazaoctane indole alkaloids: the (+)/(-)-notoamide, paraherquamide and malbrancheamide pathways.</title>
        <authorList>
            <person name="Li S."/>
            <person name="Anand K."/>
            <person name="Tran H."/>
            <person name="Yu F."/>
            <person name="Finefield J.M."/>
            <person name="Sunderhaus J.D."/>
            <person name="McAfoos T.J."/>
            <person name="Tsukamoto S."/>
            <person name="Williams R.M."/>
            <person name="Sherman D.H."/>
        </authorList>
    </citation>
    <scope>NUCLEOTIDE SEQUENCE [GENOMIC DNA]</scope>
    <scope>FUNCTION</scope>
    <scope>PATHWAY</scope>
    <source>
        <strain>ATCC 20841 / MF5123</strain>
    </source>
</reference>
<reference key="2">
    <citation type="journal article" date="2019" name="Nat. Chem.">
        <title>Fungal indole alkaloid biogenesis through evolution of a bifunctional reductase/Diels-Alderase.</title>
        <authorList>
            <person name="Dan Q."/>
            <person name="Newmister S.A."/>
            <person name="Klas K.R."/>
            <person name="Fraley A.E."/>
            <person name="McAfoos T.J."/>
            <person name="Somoza A.D."/>
            <person name="Sunderhaus J.D."/>
            <person name="Ye Y."/>
            <person name="Shende V.V."/>
            <person name="Yu F."/>
            <person name="Sanders J.N."/>
            <person name="Brown W.C."/>
            <person name="Zhao L."/>
            <person name="Paton R.S."/>
            <person name="Houk K.N."/>
            <person name="Smith J.L."/>
            <person name="Sherman D.H."/>
            <person name="Williams R.M."/>
        </authorList>
    </citation>
    <scope>FUNCTION</scope>
</reference>
<dbReference type="EC" id="2.5.1.-" evidence="6"/>
<dbReference type="EMBL" id="JQ708195">
    <property type="protein sequence ID" value="AGA37268.1"/>
    <property type="molecule type" value="Genomic_DNA"/>
</dbReference>
<dbReference type="SMR" id="L0E4G3"/>
<dbReference type="GO" id="GO:0004659">
    <property type="term" value="F:prenyltransferase activity"/>
    <property type="evidence" value="ECO:0007669"/>
    <property type="project" value="UniProtKB-KW"/>
</dbReference>
<dbReference type="GO" id="GO:0009820">
    <property type="term" value="P:alkaloid metabolic process"/>
    <property type="evidence" value="ECO:0007669"/>
    <property type="project" value="UniProtKB-KW"/>
</dbReference>
<dbReference type="CDD" id="cd13929">
    <property type="entry name" value="PT-DMATS_CymD"/>
    <property type="match status" value="1"/>
</dbReference>
<dbReference type="InterPro" id="IPR017795">
    <property type="entry name" value="Aro_prenylTrfase_DMATS"/>
</dbReference>
<dbReference type="NCBIfam" id="TIGR03429">
    <property type="entry name" value="arom_pren_DMATS"/>
    <property type="match status" value="1"/>
</dbReference>
<dbReference type="PANTHER" id="PTHR40627">
    <property type="entry name" value="INDOLE PRENYLTRANSFERASE TDIB-RELATED"/>
    <property type="match status" value="1"/>
</dbReference>
<dbReference type="PANTHER" id="PTHR40627:SF3">
    <property type="entry name" value="PRENYLTRANSFERASE ASQH2-RELATED"/>
    <property type="match status" value="1"/>
</dbReference>
<dbReference type="Pfam" id="PF11991">
    <property type="entry name" value="Trp_DMAT"/>
    <property type="match status" value="1"/>
</dbReference>
<name>PHQA_PENFE</name>